<feature type="chain" id="PRO_0000130534" description="Large ribosomal subunit protein uL29">
    <location>
        <begin position="1"/>
        <end position="123"/>
    </location>
</feature>
<feature type="modified residue" description="N6-acetyllysine" evidence="1">
    <location>
        <position position="19"/>
    </location>
</feature>
<feature type="modified residue" description="Phosphoserine" evidence="1">
    <location>
        <position position="29"/>
    </location>
</feature>
<feature type="modified residue" description="N6-acetyllysine" evidence="1">
    <location>
        <position position="43"/>
    </location>
</feature>
<feature type="cross-link" description="Glycyl lysine isopeptide (Lys-Gly) (interchain with G-Cter in SUMO2)" evidence="1">
    <location>
        <position position="25"/>
    </location>
</feature>
<feature type="sequence conflict" description="In Ref. 4; ABK55652." evidence="2" ref="4">
    <original>K</original>
    <variation>R</variation>
    <location>
        <position position="14"/>
    </location>
</feature>
<feature type="sequence conflict" description="In Ref. 5; CAA23237." evidence="2" ref="5">
    <original>A</original>
    <variation>G</variation>
    <location>
        <position position="34"/>
    </location>
</feature>
<feature type="sequence conflict" description="In Ref. 5." evidence="2" ref="5">
    <original>LN</original>
    <variation>ST</variation>
    <location>
        <begin position="95"/>
        <end position="96"/>
    </location>
</feature>
<feature type="sequence conflict" description="In Ref. 4; ABK55652." evidence="2" ref="4">
    <original>T</original>
    <variation>P</variation>
    <location>
        <position position="104"/>
    </location>
</feature>
<dbReference type="EMBL" id="AB055884">
    <property type="protein sequence ID" value="BAB32661.1"/>
    <property type="molecule type" value="mRNA"/>
</dbReference>
<dbReference type="EMBL" id="AP009124">
    <property type="protein sequence ID" value="BAF45334.1"/>
    <property type="molecule type" value="Genomic_DNA"/>
</dbReference>
<dbReference type="EMBL" id="AY550044">
    <property type="protein sequence ID" value="AAS55902.1"/>
    <property type="molecule type" value="mRNA"/>
</dbReference>
<dbReference type="EMBL" id="DQ629168">
    <property type="protein sequence ID" value="ABK55652.1"/>
    <property type="molecule type" value="mRNA"/>
</dbReference>
<dbReference type="EMBL" id="F14766">
    <property type="protein sequence ID" value="CAA23237.1"/>
    <property type="molecule type" value="mRNA"/>
</dbReference>
<dbReference type="RefSeq" id="NP_999491.1">
    <property type="nucleotide sequence ID" value="NM_214326.2"/>
</dbReference>
<dbReference type="PDB" id="3J7O">
    <property type="method" value="EM"/>
    <property type="resolution" value="3.40 A"/>
    <property type="chains" value="h=1-123"/>
</dbReference>
<dbReference type="PDB" id="3J7P">
    <property type="method" value="EM"/>
    <property type="resolution" value="3.50 A"/>
    <property type="chains" value="h=1-123"/>
</dbReference>
<dbReference type="PDB" id="3J7Q">
    <property type="method" value="EM"/>
    <property type="resolution" value="3.40 A"/>
    <property type="chains" value="h=1-123"/>
</dbReference>
<dbReference type="PDB" id="3J7R">
    <property type="method" value="EM"/>
    <property type="resolution" value="3.90 A"/>
    <property type="chains" value="h=1-123"/>
</dbReference>
<dbReference type="PDBsum" id="3J7O"/>
<dbReference type="PDBsum" id="3J7P"/>
<dbReference type="PDBsum" id="3J7Q"/>
<dbReference type="PDBsum" id="3J7R"/>
<dbReference type="SMR" id="Q29361"/>
<dbReference type="FunCoup" id="Q29361">
    <property type="interactions" value="1716"/>
</dbReference>
<dbReference type="STRING" id="9823.ENSSSCP00000063069"/>
<dbReference type="PaxDb" id="9823-ENSSSCP00000005993"/>
<dbReference type="PeptideAtlas" id="Q29361"/>
<dbReference type="Ensembl" id="ENSSSCT00000042194.2">
    <property type="protein sequence ID" value="ENSSSCP00000052105.1"/>
    <property type="gene ID" value="ENSSSCG00000034227.3"/>
</dbReference>
<dbReference type="Ensembl" id="ENSSSCT00015048117.1">
    <property type="protein sequence ID" value="ENSSSCP00015019093.1"/>
    <property type="gene ID" value="ENSSSCG00015036242.1"/>
</dbReference>
<dbReference type="Ensembl" id="ENSSSCT00015048280.1">
    <property type="protein sequence ID" value="ENSSSCP00015019180.1"/>
    <property type="gene ID" value="ENSSSCG00015036242.1"/>
</dbReference>
<dbReference type="Ensembl" id="ENSSSCT00025042268.1">
    <property type="protein sequence ID" value="ENSSSCP00025017990.1"/>
    <property type="gene ID" value="ENSSSCG00025031064.1"/>
</dbReference>
<dbReference type="Ensembl" id="ENSSSCT00025042332.1">
    <property type="protein sequence ID" value="ENSSSCP00025018019.1"/>
    <property type="gene ID" value="ENSSSCG00025031064.1"/>
</dbReference>
<dbReference type="Ensembl" id="ENSSSCT00030065195.1">
    <property type="protein sequence ID" value="ENSSSCP00030029780.1"/>
    <property type="gene ID" value="ENSSSCG00030046747.1"/>
</dbReference>
<dbReference type="Ensembl" id="ENSSSCT00030065211.1">
    <property type="protein sequence ID" value="ENSSSCP00030029788.1"/>
    <property type="gene ID" value="ENSSSCG00030046747.1"/>
</dbReference>
<dbReference type="Ensembl" id="ENSSSCT00040003504.1">
    <property type="protein sequence ID" value="ENSSSCP00040001068.1"/>
    <property type="gene ID" value="ENSSSCG00040002830.1"/>
</dbReference>
<dbReference type="Ensembl" id="ENSSSCT00045058878.1">
    <property type="protein sequence ID" value="ENSSSCP00045041199.1"/>
    <property type="gene ID" value="ENSSSCG00045034378.1"/>
</dbReference>
<dbReference type="Ensembl" id="ENSSSCT00045058943.1">
    <property type="protein sequence ID" value="ENSSSCP00045041258.1"/>
    <property type="gene ID" value="ENSSSCG00045034378.1"/>
</dbReference>
<dbReference type="Ensembl" id="ENSSSCT00055054790.1">
    <property type="protein sequence ID" value="ENSSSCP00055043713.1"/>
    <property type="gene ID" value="ENSSSCG00055027677.1"/>
</dbReference>
<dbReference type="Ensembl" id="ENSSSCT00055054832.1">
    <property type="protein sequence ID" value="ENSSSCP00055043750.1"/>
    <property type="gene ID" value="ENSSSCG00055027677.1"/>
</dbReference>
<dbReference type="Ensembl" id="ENSSSCT00060106823.1">
    <property type="protein sequence ID" value="ENSSSCP00060047252.1"/>
    <property type="gene ID" value="ENSSSCG00060077566.1"/>
</dbReference>
<dbReference type="Ensembl" id="ENSSSCT00060106846.1">
    <property type="protein sequence ID" value="ENSSSCP00060047267.1"/>
    <property type="gene ID" value="ENSSSCG00060077566.1"/>
</dbReference>
<dbReference type="Ensembl" id="ENSSSCT00065024912.1">
    <property type="protein sequence ID" value="ENSSSCP00065010165.1"/>
    <property type="gene ID" value="ENSSSCG00065018751.1"/>
</dbReference>
<dbReference type="Ensembl" id="ENSSSCT00065024921.1">
    <property type="protein sequence ID" value="ENSSSCP00065010172.1"/>
    <property type="gene ID" value="ENSSSCG00065018751.1"/>
</dbReference>
<dbReference type="Ensembl" id="ENSSSCT00070032952.1">
    <property type="protein sequence ID" value="ENSSSCP00070027515.1"/>
    <property type="gene ID" value="ENSSSCG00070016719.1"/>
</dbReference>
<dbReference type="Ensembl" id="ENSSSCT00070032956.1">
    <property type="protein sequence ID" value="ENSSSCP00070027519.1"/>
    <property type="gene ID" value="ENSSSCG00070016719.1"/>
</dbReference>
<dbReference type="Ensembl" id="ENSSSCT00090051575">
    <property type="protein sequence ID" value="ENSSSCP00090032048"/>
    <property type="gene ID" value="ENSSSCG00090029171"/>
</dbReference>
<dbReference type="Ensembl" id="ENSSSCT00105010036">
    <property type="protein sequence ID" value="ENSSSCP00105007341"/>
    <property type="gene ID" value="ENSSSCG00105005033"/>
</dbReference>
<dbReference type="Ensembl" id="ENSSSCT00110027874">
    <property type="protein sequence ID" value="ENSSSCP00110018588"/>
    <property type="gene ID" value="ENSSSCG00110014717"/>
</dbReference>
<dbReference type="Ensembl" id="ENSSSCT00115015206">
    <property type="protein sequence ID" value="ENSSSCP00115014355"/>
    <property type="gene ID" value="ENSSSCG00115008724"/>
</dbReference>
<dbReference type="Ensembl" id="ENSSSCT00115015210">
    <property type="protein sequence ID" value="ENSSSCP00115014358"/>
    <property type="gene ID" value="ENSSSCG00115008724"/>
</dbReference>
<dbReference type="Ensembl" id="ENSSSCT00130070960">
    <property type="protein sequence ID" value="ENSSSCP00130051307"/>
    <property type="gene ID" value="ENSSSCG00130036213"/>
</dbReference>
<dbReference type="GeneID" id="397598"/>
<dbReference type="KEGG" id="ssc:397598"/>
<dbReference type="CTD" id="11224"/>
<dbReference type="VGNC" id="VGNC:103164">
    <property type="gene designation" value="RPL35"/>
</dbReference>
<dbReference type="eggNOG" id="KOG3436">
    <property type="taxonomic scope" value="Eukaryota"/>
</dbReference>
<dbReference type="GeneTree" id="ENSGT00390000016384"/>
<dbReference type="HOGENOM" id="CLU_110381_1_1_1"/>
<dbReference type="InParanoid" id="Q29361"/>
<dbReference type="OMA" id="VMNQKAR"/>
<dbReference type="OrthoDB" id="528635at2759"/>
<dbReference type="TreeFam" id="TF314951"/>
<dbReference type="Reactome" id="R-SSC-156827">
    <property type="pathway name" value="L13a-mediated translational silencing of Ceruloplasmin expression"/>
</dbReference>
<dbReference type="Reactome" id="R-SSC-1799339">
    <property type="pathway name" value="SRP-dependent cotranslational protein targeting to membrane"/>
</dbReference>
<dbReference type="Reactome" id="R-SSC-6791226">
    <property type="pathway name" value="Major pathway of rRNA processing in the nucleolus and cytosol"/>
</dbReference>
<dbReference type="Reactome" id="R-SSC-72689">
    <property type="pathway name" value="Formation of a pool of free 40S subunits"/>
</dbReference>
<dbReference type="Reactome" id="R-SSC-72706">
    <property type="pathway name" value="GTP hydrolysis and joining of the 60S ribosomal subunit"/>
</dbReference>
<dbReference type="Reactome" id="R-SSC-975956">
    <property type="pathway name" value="Nonsense Mediated Decay (NMD) independent of the Exon Junction Complex (EJC)"/>
</dbReference>
<dbReference type="Reactome" id="R-SSC-975957">
    <property type="pathway name" value="Nonsense Mediated Decay (NMD) enhanced by the Exon Junction Complex (EJC)"/>
</dbReference>
<dbReference type="Proteomes" id="UP000008227">
    <property type="component" value="Chromosome 1"/>
</dbReference>
<dbReference type="Proteomes" id="UP000314985">
    <property type="component" value="Chromosome 1"/>
</dbReference>
<dbReference type="Proteomes" id="UP000694570">
    <property type="component" value="Unplaced"/>
</dbReference>
<dbReference type="Proteomes" id="UP000694571">
    <property type="component" value="Unplaced"/>
</dbReference>
<dbReference type="Proteomes" id="UP000694720">
    <property type="component" value="Unplaced"/>
</dbReference>
<dbReference type="Proteomes" id="UP000694722">
    <property type="component" value="Unplaced"/>
</dbReference>
<dbReference type="Proteomes" id="UP000694723">
    <property type="component" value="Unplaced"/>
</dbReference>
<dbReference type="Proteomes" id="UP000694724">
    <property type="component" value="Unplaced"/>
</dbReference>
<dbReference type="Proteomes" id="UP000694725">
    <property type="component" value="Unplaced"/>
</dbReference>
<dbReference type="Proteomes" id="UP000694726">
    <property type="component" value="Unplaced"/>
</dbReference>
<dbReference type="Proteomes" id="UP000694727">
    <property type="component" value="Unplaced"/>
</dbReference>
<dbReference type="Proteomes" id="UP000694728">
    <property type="component" value="Unplaced"/>
</dbReference>
<dbReference type="Bgee" id="ENSSSCG00000034227">
    <property type="expression patterns" value="Expressed in blood and 45 other cell types or tissues"/>
</dbReference>
<dbReference type="GO" id="GO:0098556">
    <property type="term" value="C:cytoplasmic side of rough endoplasmic reticulum membrane"/>
    <property type="evidence" value="ECO:0000314"/>
    <property type="project" value="UniProtKB"/>
</dbReference>
<dbReference type="GO" id="GO:0022625">
    <property type="term" value="C:cytosolic large ribosomal subunit"/>
    <property type="evidence" value="ECO:0000318"/>
    <property type="project" value="GO_Central"/>
</dbReference>
<dbReference type="GO" id="GO:0015934">
    <property type="term" value="C:large ribosomal subunit"/>
    <property type="evidence" value="ECO:0000314"/>
    <property type="project" value="UniProtKB"/>
</dbReference>
<dbReference type="GO" id="GO:0003729">
    <property type="term" value="F:mRNA binding"/>
    <property type="evidence" value="ECO:0000318"/>
    <property type="project" value="GO_Central"/>
</dbReference>
<dbReference type="GO" id="GO:0003735">
    <property type="term" value="F:structural constituent of ribosome"/>
    <property type="evidence" value="ECO:0000318"/>
    <property type="project" value="GO_Central"/>
</dbReference>
<dbReference type="GO" id="GO:0000463">
    <property type="term" value="P:maturation of LSU-rRNA from tricistronic rRNA transcript (SSU-rRNA, 5.8S rRNA, LSU-rRNA)"/>
    <property type="evidence" value="ECO:0000318"/>
    <property type="project" value="GO_Central"/>
</dbReference>
<dbReference type="GO" id="GO:0006412">
    <property type="term" value="P:translation"/>
    <property type="evidence" value="ECO:0007669"/>
    <property type="project" value="InterPro"/>
</dbReference>
<dbReference type="CDD" id="cd00427">
    <property type="entry name" value="Ribosomal_L29_HIP"/>
    <property type="match status" value="1"/>
</dbReference>
<dbReference type="FunFam" id="1.10.287.310:FF:000002">
    <property type="entry name" value="60S ribosomal protein L35"/>
    <property type="match status" value="1"/>
</dbReference>
<dbReference type="FunFam" id="6.10.250.3450:FF:000001">
    <property type="entry name" value="60S ribosomal protein L35"/>
    <property type="match status" value="1"/>
</dbReference>
<dbReference type="Gene3D" id="1.10.287.310">
    <property type="match status" value="1"/>
</dbReference>
<dbReference type="Gene3D" id="6.10.250.3450">
    <property type="match status" value="1"/>
</dbReference>
<dbReference type="HAMAP" id="MF_00374">
    <property type="entry name" value="Ribosomal_uL29"/>
    <property type="match status" value="1"/>
</dbReference>
<dbReference type="InterPro" id="IPR001854">
    <property type="entry name" value="Ribosomal_uL29"/>
</dbReference>
<dbReference type="InterPro" id="IPR018254">
    <property type="entry name" value="Ribosomal_uL29_CS"/>
</dbReference>
<dbReference type="InterPro" id="IPR045059">
    <property type="entry name" value="Ribosomal_uL29_euk"/>
</dbReference>
<dbReference type="InterPro" id="IPR036049">
    <property type="entry name" value="Ribosomal_uL29_sf"/>
</dbReference>
<dbReference type="NCBIfam" id="TIGR00012">
    <property type="entry name" value="L29"/>
    <property type="match status" value="1"/>
</dbReference>
<dbReference type="PANTHER" id="PTHR45722">
    <property type="entry name" value="60S RIBOSOMAL PROTEIN L35"/>
    <property type="match status" value="1"/>
</dbReference>
<dbReference type="PANTHER" id="PTHR45722:SF2">
    <property type="entry name" value="LARGE RIBOSOMAL SUBUNIT PROTEIN UL29-RELATED"/>
    <property type="match status" value="1"/>
</dbReference>
<dbReference type="Pfam" id="PF00831">
    <property type="entry name" value="Ribosomal_L29"/>
    <property type="match status" value="1"/>
</dbReference>
<dbReference type="SUPFAM" id="SSF46561">
    <property type="entry name" value="Ribosomal protein L29 (L29p)"/>
    <property type="match status" value="1"/>
</dbReference>
<dbReference type="PROSITE" id="PS00579">
    <property type="entry name" value="RIBOSOMAL_L29"/>
    <property type="match status" value="1"/>
</dbReference>
<sequence length="123" mass="14550">MAKIKARDLRGKKKEELLKQLEDLKVELSQLRVAKVTGGAASKLSKIRVVRKSIARVLTVINQTQKENLRKFYKGKKYKPLDLRPKKTRAMRRRLNKHEENLKTKKQQRKERLYPLRKFAVKA</sequence>
<organism>
    <name type="scientific">Sus scrofa</name>
    <name type="common">Pig</name>
    <dbReference type="NCBI Taxonomy" id="9823"/>
    <lineage>
        <taxon>Eukaryota</taxon>
        <taxon>Metazoa</taxon>
        <taxon>Chordata</taxon>
        <taxon>Craniata</taxon>
        <taxon>Vertebrata</taxon>
        <taxon>Euteleostomi</taxon>
        <taxon>Mammalia</taxon>
        <taxon>Eutheria</taxon>
        <taxon>Laurasiatheria</taxon>
        <taxon>Artiodactyla</taxon>
        <taxon>Suina</taxon>
        <taxon>Suidae</taxon>
        <taxon>Sus</taxon>
    </lineage>
</organism>
<reference key="1">
    <citation type="journal article" date="2001" name="DNA Seq.">
        <title>Nucleotide sequence of the porcine 60S ribosomal protein L35 cDNA.</title>
        <authorList>
            <person name="Horibe T."/>
            <person name="Kikuchi M."/>
        </authorList>
    </citation>
    <scope>NUCLEOTIDE SEQUENCE [MRNA]</scope>
</reference>
<reference key="2">
    <citation type="journal article" date="2007" name="Genome Res.">
        <title>Fine mapping of a swine quantitative trait locus for number of vertebrae and analysis of an orphan nuclear receptor, germ cell nuclear factor (NR6A1).</title>
        <authorList>
            <person name="Mikawa S."/>
            <person name="Morozumi T."/>
            <person name="Shimanuki S."/>
            <person name="Hayashi T."/>
            <person name="Uenishi H."/>
            <person name="Domukai M."/>
            <person name="Okumura N."/>
            <person name="Awata T."/>
        </authorList>
    </citation>
    <scope>NUCLEOTIDE SEQUENCE [GENOMIC DNA]</scope>
    <source>
        <strain>Large white X Landrace X Duroc</strain>
    </source>
</reference>
<reference key="3">
    <citation type="submission" date="2004-02" db="EMBL/GenBank/DDBJ databases">
        <title>Identification of differentially expressed genes in porcine embryos.</title>
        <authorList>
            <person name="Lee H.Y."/>
            <person name="Cui X.S."/>
            <person name="Jeong Y.J."/>
            <person name="Shin M.L."/>
            <person name="Hwang K.C."/>
            <person name="Kim N.H."/>
        </authorList>
    </citation>
    <scope>NUCLEOTIDE SEQUENCE [MRNA]</scope>
</reference>
<reference key="4">
    <citation type="submission" date="2006-05" db="EMBL/GenBank/DDBJ databases">
        <title>Generation and analysis of cDNA sequences derived from a porcine skeletal muscle library.</title>
        <authorList>
            <person name="Cai G."/>
            <person name="Chen Y."/>
            <person name="Wang C."/>
            <person name="Li J."/>
            <person name="Peng G."/>
            <person name="Zhang H."/>
        </authorList>
    </citation>
    <scope>NUCLEOTIDE SEQUENCE [LARGE SCALE MRNA]</scope>
    <source>
        <tissue>Longissimus dorsi muscle</tissue>
    </source>
</reference>
<reference key="5">
    <citation type="journal article" date="1996" name="Mamm. Genome">
        <title>Evaluation and characterization of a porcine small intestine cDNA library: analysis of 839 clones.</title>
        <authorList>
            <person name="Winteroe A.K."/>
            <person name="Fredholm M."/>
            <person name="Davies W."/>
        </authorList>
    </citation>
    <scope>NUCLEOTIDE SEQUENCE [LARGE SCALE MRNA] OF 3-96</scope>
    <source>
        <tissue>Small intestine</tissue>
    </source>
</reference>
<protein>
    <recommendedName>
        <fullName evidence="2">Large ribosomal subunit protein uL29</fullName>
    </recommendedName>
    <alternativeName>
        <fullName>60S ribosomal protein L35</fullName>
    </alternativeName>
</protein>
<accession>Q29361</accession>
<accession>A1XQU6</accession>
<accession>A2BD10</accession>
<accession>Q9BGU2</accession>
<proteinExistence type="evidence at protein level"/>
<keyword id="KW-0002">3D-structure</keyword>
<keyword id="KW-0007">Acetylation</keyword>
<keyword id="KW-0963">Cytoplasm</keyword>
<keyword id="KW-1017">Isopeptide bond</keyword>
<keyword id="KW-0597">Phosphoprotein</keyword>
<keyword id="KW-1185">Reference proteome</keyword>
<keyword id="KW-0687">Ribonucleoprotein</keyword>
<keyword id="KW-0689">Ribosomal protein</keyword>
<keyword id="KW-0832">Ubl conjugation</keyword>
<evidence type="ECO:0000250" key="1">
    <source>
        <dbReference type="UniProtKB" id="P42766"/>
    </source>
</evidence>
<evidence type="ECO:0000305" key="2"/>
<name>RL35_PIG</name>
<comment type="function">
    <text evidence="1">Component of the large ribosomal subunit. The ribosome is a large ribonucleoprotein complex responsible for the synthesis of proteins in the cell.</text>
</comment>
<comment type="subunit">
    <text evidence="1">Component of the large ribosomal subunit.</text>
</comment>
<comment type="subcellular location">
    <subcellularLocation>
        <location evidence="1">Cytoplasm</location>
    </subcellularLocation>
</comment>
<comment type="similarity">
    <text evidence="2">Belongs to the universal ribosomal protein uL29 family.</text>
</comment>
<gene>
    <name type="primary">RPL35</name>
</gene>